<accession>Q9VRX6</accession>
<keyword id="KW-0965">Cell junction</keyword>
<keyword id="KW-1003">Cell membrane</keyword>
<keyword id="KW-0303">Gap junction</keyword>
<keyword id="KW-0407">Ion channel</keyword>
<keyword id="KW-0406">Ion transport</keyword>
<keyword id="KW-0472">Membrane</keyword>
<keyword id="KW-1185">Reference proteome</keyword>
<keyword id="KW-0812">Transmembrane</keyword>
<keyword id="KW-1133">Transmembrane helix</keyword>
<keyword id="KW-0813">Transport</keyword>
<evidence type="ECO:0000255" key="1"/>
<evidence type="ECO:0000255" key="2">
    <source>
        <dbReference type="PROSITE-ProRule" id="PRU00351"/>
    </source>
</evidence>
<evidence type="ECO:0000269" key="3">
    <source>
    </source>
</evidence>
<evidence type="ECO:0000269" key="4">
    <source>
    </source>
</evidence>
<sequence length="367" mass="42784">MYAAVKPLSKYLQFKSVHIYDAIFTLHSKVTVALLLACTFLLSSKQYFGDPIQCFGDKDMDYVHAFCWIYGAYVSDNVTVTPLRNGAAQCRPDAVSKVVPPENRNYITYYQWVVLVLLLESFVFYMPAFLWKIWEGGRLKHLCDDFHKMAVCKDKSRTHLRVLVNYFSSDYKETHFRYFVSYVFCEILNLSISILNFLLLDVFFGGFWGRYRNALLSLYNGDYNQWNIITMAVFPKCAKCEMYKGGPSGSSNIYDYLCLLPLNILNEKIFAFLWIWFILVAMLISLKFLYRLATVLYPGMRLQLLRARARFMPKKHLQVALRNCSFGDWFVLMRVGNNISPELFRKLLEELYEAQSLIKIPPGADKI</sequence>
<organism>
    <name type="scientific">Drosophila melanogaster</name>
    <name type="common">Fruit fly</name>
    <dbReference type="NCBI Taxonomy" id="7227"/>
    <lineage>
        <taxon>Eukaryota</taxon>
        <taxon>Metazoa</taxon>
        <taxon>Ecdysozoa</taxon>
        <taxon>Arthropoda</taxon>
        <taxon>Hexapoda</taxon>
        <taxon>Insecta</taxon>
        <taxon>Pterygota</taxon>
        <taxon>Neoptera</taxon>
        <taxon>Endopterygota</taxon>
        <taxon>Diptera</taxon>
        <taxon>Brachycera</taxon>
        <taxon>Muscomorpha</taxon>
        <taxon>Ephydroidea</taxon>
        <taxon>Drosophilidae</taxon>
        <taxon>Drosophila</taxon>
        <taxon>Sophophora</taxon>
    </lineage>
</organism>
<name>INX4_DROME</name>
<feature type="chain" id="PRO_0000208499" description="Innexin inx4">
    <location>
        <begin position="1"/>
        <end position="367"/>
    </location>
</feature>
<feature type="topological domain" description="Cytoplasmic" evidence="1">
    <location>
        <begin position="1"/>
        <end position="21"/>
    </location>
</feature>
<feature type="transmembrane region" description="Helical" evidence="2">
    <location>
        <begin position="22"/>
        <end position="42"/>
    </location>
</feature>
<feature type="topological domain" description="Extracellular" evidence="1">
    <location>
        <begin position="43"/>
        <end position="110"/>
    </location>
</feature>
<feature type="transmembrane region" description="Helical" evidence="2">
    <location>
        <begin position="111"/>
        <end position="131"/>
    </location>
</feature>
<feature type="topological domain" description="Cytoplasmic" evidence="1">
    <location>
        <begin position="132"/>
        <end position="186"/>
    </location>
</feature>
<feature type="transmembrane region" description="Helical" evidence="2">
    <location>
        <begin position="187"/>
        <end position="207"/>
    </location>
</feature>
<feature type="topological domain" description="Extracellular" evidence="1">
    <location>
        <begin position="208"/>
        <end position="268"/>
    </location>
</feature>
<feature type="transmembrane region" description="Helical" evidence="2">
    <location>
        <begin position="269"/>
        <end position="289"/>
    </location>
</feature>
<feature type="topological domain" description="Cytoplasmic" evidence="1">
    <location>
        <begin position="290"/>
        <end position="367"/>
    </location>
</feature>
<comment type="function">
    <text evidence="3 4">Structural component of the gap junctions in germline cells. Required for differentiation and survival of germline cysts in females and of spermatogonia in males; gap junctional communication between spermatogonia and somatic cyst cells may be required for normal differentiation and survival of spermatogonia.</text>
</comment>
<comment type="subcellular location">
    <subcellularLocation>
        <location evidence="4">Cell membrane</location>
        <topology evidence="2 4">Multi-pass membrane protein</topology>
    </subcellularLocation>
    <subcellularLocation>
        <location evidence="4">Cell junction</location>
        <location evidence="4">Gap junction</location>
    </subcellularLocation>
    <text>Concentrated at the interface between germline and somatic support cells in spermatogonia, early spermatocytes and germ cells in the ovary.</text>
</comment>
<comment type="tissue specificity">
    <text evidence="3 4">Expressed in nurse cells and oocyte during oogenesis. Uniform expression in imaginal wing disk and low expression in developing imaginal CNS. Expressed in embryonic pole cells and primordial germ cells.</text>
</comment>
<comment type="developmental stage">
    <text evidence="4">Expressed both maternally and zygotically. First seen at the embryonic syncytial blastoderm stage.</text>
</comment>
<comment type="similarity">
    <text evidence="2">Belongs to the pannexin family.</text>
</comment>
<dbReference type="EMBL" id="AF271718">
    <property type="protein sequence ID" value="AAL36976.1"/>
    <property type="molecule type" value="mRNA"/>
</dbReference>
<dbReference type="EMBL" id="AE014296">
    <property type="protein sequence ID" value="AAF50655.1"/>
    <property type="molecule type" value="Genomic_DNA"/>
</dbReference>
<dbReference type="EMBL" id="AY094856">
    <property type="protein sequence ID" value="AAM11209.1"/>
    <property type="molecule type" value="mRNA"/>
</dbReference>
<dbReference type="RefSeq" id="NP_001261478.1">
    <property type="nucleotide sequence ID" value="NM_001274549.1"/>
</dbReference>
<dbReference type="RefSeq" id="NP_648049.1">
    <property type="nucleotide sequence ID" value="NM_139792.3"/>
</dbReference>
<dbReference type="BioGRID" id="75539">
    <property type="interactions" value="5"/>
</dbReference>
<dbReference type="DIP" id="DIP-17426N"/>
<dbReference type="FunCoup" id="Q9VRX6">
    <property type="interactions" value="10"/>
</dbReference>
<dbReference type="STRING" id="7227.FBpp0303218"/>
<dbReference type="TCDB" id="1.A.25.1.8">
    <property type="family name" value="the gap junction-forming innexin (innexin) family"/>
</dbReference>
<dbReference type="PaxDb" id="7227-FBpp0303218"/>
<dbReference type="DNASU" id="251414"/>
<dbReference type="EnsemblMetazoa" id="FBtr0076983">
    <property type="protein sequence ID" value="FBpp0076692"/>
    <property type="gene ID" value="FBgn0024177"/>
</dbReference>
<dbReference type="EnsemblMetazoa" id="FBtr0330185">
    <property type="protein sequence ID" value="FBpp0303218"/>
    <property type="gene ID" value="FBgn0024177"/>
</dbReference>
<dbReference type="GeneID" id="251414"/>
<dbReference type="KEGG" id="dme:Dmel_CG10125"/>
<dbReference type="AGR" id="FB:FBgn0024177"/>
<dbReference type="CTD" id="251414"/>
<dbReference type="FlyBase" id="FBgn0024177">
    <property type="gene designation" value="zpg"/>
</dbReference>
<dbReference type="VEuPathDB" id="VectorBase:FBgn0024177"/>
<dbReference type="eggNOG" id="ENOG502QR27">
    <property type="taxonomic scope" value="Eukaryota"/>
</dbReference>
<dbReference type="GeneTree" id="ENSGT00530000064205"/>
<dbReference type="HOGENOM" id="CLU_035763_1_1_1"/>
<dbReference type="InParanoid" id="Q9VRX6"/>
<dbReference type="OMA" id="MYTAVKP"/>
<dbReference type="OrthoDB" id="5867527at2759"/>
<dbReference type="PhylomeDB" id="Q9VRX6"/>
<dbReference type="BioGRID-ORCS" id="251414">
    <property type="hits" value="0 hits in 1 CRISPR screen"/>
</dbReference>
<dbReference type="GenomeRNAi" id="251414"/>
<dbReference type="PRO" id="PR:Q9VRX6"/>
<dbReference type="Proteomes" id="UP000000803">
    <property type="component" value="Chromosome 3L"/>
</dbReference>
<dbReference type="Bgee" id="FBgn0024177">
    <property type="expression patterns" value="Expressed in spermatogonium in testis and 33 other cell types or tissues"/>
</dbReference>
<dbReference type="ExpressionAtlas" id="Q9VRX6">
    <property type="expression patterns" value="baseline and differential"/>
</dbReference>
<dbReference type="GO" id="GO:0005921">
    <property type="term" value="C:gap junction"/>
    <property type="evidence" value="ECO:0000314"/>
    <property type="project" value="UniProtKB"/>
</dbReference>
<dbReference type="GO" id="GO:0016020">
    <property type="term" value="C:membrane"/>
    <property type="evidence" value="ECO:0000303"/>
    <property type="project" value="UniProtKB"/>
</dbReference>
<dbReference type="GO" id="GO:0005886">
    <property type="term" value="C:plasma membrane"/>
    <property type="evidence" value="ECO:0000314"/>
    <property type="project" value="UniProtKB"/>
</dbReference>
<dbReference type="GO" id="GO:0005243">
    <property type="term" value="F:gap junction channel activity"/>
    <property type="evidence" value="ECO:0000318"/>
    <property type="project" value="GO_Central"/>
</dbReference>
<dbReference type="GO" id="GO:0055077">
    <property type="term" value="F:gap junction hemi-channel activity"/>
    <property type="evidence" value="ECO:0000303"/>
    <property type="project" value="UniProtKB"/>
</dbReference>
<dbReference type="GO" id="GO:0007281">
    <property type="term" value="P:germ cell development"/>
    <property type="evidence" value="ECO:0000315"/>
    <property type="project" value="FlyBase"/>
</dbReference>
<dbReference type="GO" id="GO:0010496">
    <property type="term" value="P:intercellular transport"/>
    <property type="evidence" value="ECO:0000250"/>
    <property type="project" value="FlyBase"/>
</dbReference>
<dbReference type="GO" id="GO:0036098">
    <property type="term" value="P:male germ-line stem cell population maintenance"/>
    <property type="evidence" value="ECO:0000315"/>
    <property type="project" value="FlyBase"/>
</dbReference>
<dbReference type="GO" id="GO:0034220">
    <property type="term" value="P:monoatomic ion transmembrane transport"/>
    <property type="evidence" value="ECO:0007669"/>
    <property type="project" value="UniProtKB-KW"/>
</dbReference>
<dbReference type="GO" id="GO:0007602">
    <property type="term" value="P:phototransduction"/>
    <property type="evidence" value="ECO:0000318"/>
    <property type="project" value="GO_Central"/>
</dbReference>
<dbReference type="GO" id="GO:0007283">
    <property type="term" value="P:spermatogenesis"/>
    <property type="evidence" value="ECO:0000315"/>
    <property type="project" value="FlyBase"/>
</dbReference>
<dbReference type="InterPro" id="IPR000990">
    <property type="entry name" value="Innexin"/>
</dbReference>
<dbReference type="PANTHER" id="PTHR11893">
    <property type="entry name" value="INNEXIN"/>
    <property type="match status" value="1"/>
</dbReference>
<dbReference type="PANTHER" id="PTHR11893:SF43">
    <property type="entry name" value="INNEXIN INX4-RELATED"/>
    <property type="match status" value="1"/>
</dbReference>
<dbReference type="Pfam" id="PF00876">
    <property type="entry name" value="Innexin"/>
    <property type="match status" value="1"/>
</dbReference>
<dbReference type="PRINTS" id="PR01262">
    <property type="entry name" value="INNEXIN"/>
</dbReference>
<dbReference type="PROSITE" id="PS51013">
    <property type="entry name" value="PANNEXIN"/>
    <property type="match status" value="1"/>
</dbReference>
<gene>
    <name type="primary">zpg</name>
    <name type="synonym">inx4</name>
    <name type="ORF">CG10125</name>
</gene>
<protein>
    <recommendedName>
        <fullName>Innexin inx4</fullName>
        <shortName>Innexin-4</shortName>
    </recommendedName>
    <alternativeName>
        <fullName>Protein zero population growth</fullName>
    </alternativeName>
</protein>
<reference key="1">
    <citation type="journal article" date="2002" name="Mech. Dev.">
        <title>Gap junctions in Drosophila: developmental expression of the entire innexin gene family.</title>
        <authorList>
            <person name="Stebbings L.A."/>
            <person name="Todman M.G."/>
            <person name="Phillips R."/>
            <person name="Greer C.E."/>
            <person name="Tam J."/>
            <person name="Phelan P."/>
            <person name="Jacobs K."/>
            <person name="Bacon J.P."/>
            <person name="Davies J.A."/>
        </authorList>
    </citation>
    <scope>NUCLEOTIDE SEQUENCE</scope>
    <scope>FUNCTION</scope>
    <scope>TISSUE SPECIFICITY</scope>
    <source>
        <tissue>Ovary</tissue>
    </source>
</reference>
<reference key="2">
    <citation type="journal article" date="2002" name="Development">
        <title>A germline-specific gap junction protein required for survival of differentiating early germ cells.</title>
        <authorList>
            <person name="Tazuke S.I."/>
            <person name="Schulz C."/>
            <person name="Gilboa L."/>
            <person name="Fogarty M."/>
            <person name="Mahowald A.P."/>
            <person name="Guichet A."/>
            <person name="Ephrussi A."/>
            <person name="Wood C.G."/>
            <person name="Lehmann R."/>
            <person name="Fuller M.T."/>
        </authorList>
    </citation>
    <scope>NUCLEOTIDE SEQUENCE</scope>
    <scope>FUNCTION</scope>
    <scope>SUBCELLULAR LOCATION</scope>
    <scope>TISSUE SPECIFICITY</scope>
    <scope>DEVELOPMENTAL STAGE</scope>
    <source>
        <tissue>Ovary</tissue>
    </source>
</reference>
<reference key="3">
    <citation type="journal article" date="2000" name="Science">
        <title>The genome sequence of Drosophila melanogaster.</title>
        <authorList>
            <person name="Adams M.D."/>
            <person name="Celniker S.E."/>
            <person name="Holt R.A."/>
            <person name="Evans C.A."/>
            <person name="Gocayne J.D."/>
            <person name="Amanatides P.G."/>
            <person name="Scherer S.E."/>
            <person name="Li P.W."/>
            <person name="Hoskins R.A."/>
            <person name="Galle R.F."/>
            <person name="George R.A."/>
            <person name="Lewis S.E."/>
            <person name="Richards S."/>
            <person name="Ashburner M."/>
            <person name="Henderson S.N."/>
            <person name="Sutton G.G."/>
            <person name="Wortman J.R."/>
            <person name="Yandell M.D."/>
            <person name="Zhang Q."/>
            <person name="Chen L.X."/>
            <person name="Brandon R.C."/>
            <person name="Rogers Y.-H.C."/>
            <person name="Blazej R.G."/>
            <person name="Champe M."/>
            <person name="Pfeiffer B.D."/>
            <person name="Wan K.H."/>
            <person name="Doyle C."/>
            <person name="Baxter E.G."/>
            <person name="Helt G."/>
            <person name="Nelson C.R."/>
            <person name="Miklos G.L.G."/>
            <person name="Abril J.F."/>
            <person name="Agbayani A."/>
            <person name="An H.-J."/>
            <person name="Andrews-Pfannkoch C."/>
            <person name="Baldwin D."/>
            <person name="Ballew R.M."/>
            <person name="Basu A."/>
            <person name="Baxendale J."/>
            <person name="Bayraktaroglu L."/>
            <person name="Beasley E.M."/>
            <person name="Beeson K.Y."/>
            <person name="Benos P.V."/>
            <person name="Berman B.P."/>
            <person name="Bhandari D."/>
            <person name="Bolshakov S."/>
            <person name="Borkova D."/>
            <person name="Botchan M.R."/>
            <person name="Bouck J."/>
            <person name="Brokstein P."/>
            <person name="Brottier P."/>
            <person name="Burtis K.C."/>
            <person name="Busam D.A."/>
            <person name="Butler H."/>
            <person name="Cadieu E."/>
            <person name="Center A."/>
            <person name="Chandra I."/>
            <person name="Cherry J.M."/>
            <person name="Cawley S."/>
            <person name="Dahlke C."/>
            <person name="Davenport L.B."/>
            <person name="Davies P."/>
            <person name="de Pablos B."/>
            <person name="Delcher A."/>
            <person name="Deng Z."/>
            <person name="Mays A.D."/>
            <person name="Dew I."/>
            <person name="Dietz S.M."/>
            <person name="Dodson K."/>
            <person name="Doup L.E."/>
            <person name="Downes M."/>
            <person name="Dugan-Rocha S."/>
            <person name="Dunkov B.C."/>
            <person name="Dunn P."/>
            <person name="Durbin K.J."/>
            <person name="Evangelista C.C."/>
            <person name="Ferraz C."/>
            <person name="Ferriera S."/>
            <person name="Fleischmann W."/>
            <person name="Fosler C."/>
            <person name="Gabrielian A.E."/>
            <person name="Garg N.S."/>
            <person name="Gelbart W.M."/>
            <person name="Glasser K."/>
            <person name="Glodek A."/>
            <person name="Gong F."/>
            <person name="Gorrell J.H."/>
            <person name="Gu Z."/>
            <person name="Guan P."/>
            <person name="Harris M."/>
            <person name="Harris N.L."/>
            <person name="Harvey D.A."/>
            <person name="Heiman T.J."/>
            <person name="Hernandez J.R."/>
            <person name="Houck J."/>
            <person name="Hostin D."/>
            <person name="Houston K.A."/>
            <person name="Howland T.J."/>
            <person name="Wei M.-H."/>
            <person name="Ibegwam C."/>
            <person name="Jalali M."/>
            <person name="Kalush F."/>
            <person name="Karpen G.H."/>
            <person name="Ke Z."/>
            <person name="Kennison J.A."/>
            <person name="Ketchum K.A."/>
            <person name="Kimmel B.E."/>
            <person name="Kodira C.D."/>
            <person name="Kraft C.L."/>
            <person name="Kravitz S."/>
            <person name="Kulp D."/>
            <person name="Lai Z."/>
            <person name="Lasko P."/>
            <person name="Lei Y."/>
            <person name="Levitsky A.A."/>
            <person name="Li J.H."/>
            <person name="Li Z."/>
            <person name="Liang Y."/>
            <person name="Lin X."/>
            <person name="Liu X."/>
            <person name="Mattei B."/>
            <person name="McIntosh T.C."/>
            <person name="McLeod M.P."/>
            <person name="McPherson D."/>
            <person name="Merkulov G."/>
            <person name="Milshina N.V."/>
            <person name="Mobarry C."/>
            <person name="Morris J."/>
            <person name="Moshrefi A."/>
            <person name="Mount S.M."/>
            <person name="Moy M."/>
            <person name="Murphy B."/>
            <person name="Murphy L."/>
            <person name="Muzny D.M."/>
            <person name="Nelson D.L."/>
            <person name="Nelson D.R."/>
            <person name="Nelson K.A."/>
            <person name="Nixon K."/>
            <person name="Nusskern D.R."/>
            <person name="Pacleb J.M."/>
            <person name="Palazzolo M."/>
            <person name="Pittman G.S."/>
            <person name="Pan S."/>
            <person name="Pollard J."/>
            <person name="Puri V."/>
            <person name="Reese M.G."/>
            <person name="Reinert K."/>
            <person name="Remington K."/>
            <person name="Saunders R.D.C."/>
            <person name="Scheeler F."/>
            <person name="Shen H."/>
            <person name="Shue B.C."/>
            <person name="Siden-Kiamos I."/>
            <person name="Simpson M."/>
            <person name="Skupski M.P."/>
            <person name="Smith T.J."/>
            <person name="Spier E."/>
            <person name="Spradling A.C."/>
            <person name="Stapleton M."/>
            <person name="Strong R."/>
            <person name="Sun E."/>
            <person name="Svirskas R."/>
            <person name="Tector C."/>
            <person name="Turner R."/>
            <person name="Venter E."/>
            <person name="Wang A.H."/>
            <person name="Wang X."/>
            <person name="Wang Z.-Y."/>
            <person name="Wassarman D.A."/>
            <person name="Weinstock G.M."/>
            <person name="Weissenbach J."/>
            <person name="Williams S.M."/>
            <person name="Woodage T."/>
            <person name="Worley K.C."/>
            <person name="Wu D."/>
            <person name="Yang S."/>
            <person name="Yao Q.A."/>
            <person name="Ye J."/>
            <person name="Yeh R.-F."/>
            <person name="Zaveri J.S."/>
            <person name="Zhan M."/>
            <person name="Zhang G."/>
            <person name="Zhao Q."/>
            <person name="Zheng L."/>
            <person name="Zheng X.H."/>
            <person name="Zhong F.N."/>
            <person name="Zhong W."/>
            <person name="Zhou X."/>
            <person name="Zhu S.C."/>
            <person name="Zhu X."/>
            <person name="Smith H.O."/>
            <person name="Gibbs R.A."/>
            <person name="Myers E.W."/>
            <person name="Rubin G.M."/>
            <person name="Venter J.C."/>
        </authorList>
    </citation>
    <scope>NUCLEOTIDE SEQUENCE [LARGE SCALE GENOMIC DNA]</scope>
    <source>
        <strain>Berkeley</strain>
    </source>
</reference>
<reference key="4">
    <citation type="journal article" date="2002" name="Genome Biol.">
        <title>Annotation of the Drosophila melanogaster euchromatic genome: a systematic review.</title>
        <authorList>
            <person name="Misra S."/>
            <person name="Crosby M.A."/>
            <person name="Mungall C.J."/>
            <person name="Matthews B.B."/>
            <person name="Campbell K.S."/>
            <person name="Hradecky P."/>
            <person name="Huang Y."/>
            <person name="Kaminker J.S."/>
            <person name="Millburn G.H."/>
            <person name="Prochnik S.E."/>
            <person name="Smith C.D."/>
            <person name="Tupy J.L."/>
            <person name="Whitfield E.J."/>
            <person name="Bayraktaroglu L."/>
            <person name="Berman B.P."/>
            <person name="Bettencourt B.R."/>
            <person name="Celniker S.E."/>
            <person name="de Grey A.D.N.J."/>
            <person name="Drysdale R.A."/>
            <person name="Harris N.L."/>
            <person name="Richter J."/>
            <person name="Russo S."/>
            <person name="Schroeder A.J."/>
            <person name="Shu S.Q."/>
            <person name="Stapleton M."/>
            <person name="Yamada C."/>
            <person name="Ashburner M."/>
            <person name="Gelbart W.M."/>
            <person name="Rubin G.M."/>
            <person name="Lewis S.E."/>
        </authorList>
    </citation>
    <scope>GENOME REANNOTATION</scope>
    <source>
        <strain>Berkeley</strain>
    </source>
</reference>
<reference key="5">
    <citation type="journal article" date="2002" name="Genome Biol.">
        <title>A Drosophila full-length cDNA resource.</title>
        <authorList>
            <person name="Stapleton M."/>
            <person name="Carlson J.W."/>
            <person name="Brokstein P."/>
            <person name="Yu C."/>
            <person name="Champe M."/>
            <person name="George R.A."/>
            <person name="Guarin H."/>
            <person name="Kronmiller B."/>
            <person name="Pacleb J.M."/>
            <person name="Park S."/>
            <person name="Wan K.H."/>
            <person name="Rubin G.M."/>
            <person name="Celniker S.E."/>
        </authorList>
    </citation>
    <scope>NUCLEOTIDE SEQUENCE [LARGE SCALE MRNA]</scope>
    <source>
        <strain>Berkeley</strain>
        <tissue>Embryo</tissue>
    </source>
</reference>
<proteinExistence type="evidence at transcript level"/>